<dbReference type="EC" id="6.1.1.1" evidence="1"/>
<dbReference type="EMBL" id="CP000254">
    <property type="protein sequence ID" value="ABD42163.1"/>
    <property type="molecule type" value="Genomic_DNA"/>
</dbReference>
<dbReference type="RefSeq" id="WP_011449421.1">
    <property type="nucleotide sequence ID" value="NC_007796.1"/>
</dbReference>
<dbReference type="SMR" id="Q2FNA1"/>
<dbReference type="FunCoup" id="Q2FNA1">
    <property type="interactions" value="222"/>
</dbReference>
<dbReference type="STRING" id="323259.Mhun_2463"/>
<dbReference type="EnsemblBacteria" id="ABD42163">
    <property type="protein sequence ID" value="ABD42163"/>
    <property type="gene ID" value="Mhun_2463"/>
</dbReference>
<dbReference type="GeneID" id="3923968"/>
<dbReference type="KEGG" id="mhu:Mhun_2463"/>
<dbReference type="eggNOG" id="arCOG01886">
    <property type="taxonomic scope" value="Archaea"/>
</dbReference>
<dbReference type="HOGENOM" id="CLU_035267_0_1_2"/>
<dbReference type="InParanoid" id="Q2FNA1"/>
<dbReference type="OrthoDB" id="8389at2157"/>
<dbReference type="Proteomes" id="UP000001941">
    <property type="component" value="Chromosome"/>
</dbReference>
<dbReference type="GO" id="GO:0005737">
    <property type="term" value="C:cytoplasm"/>
    <property type="evidence" value="ECO:0007669"/>
    <property type="project" value="UniProtKB-SubCell"/>
</dbReference>
<dbReference type="GO" id="GO:0005524">
    <property type="term" value="F:ATP binding"/>
    <property type="evidence" value="ECO:0007669"/>
    <property type="project" value="UniProtKB-UniRule"/>
</dbReference>
<dbReference type="GO" id="GO:0004831">
    <property type="term" value="F:tyrosine-tRNA ligase activity"/>
    <property type="evidence" value="ECO:0007669"/>
    <property type="project" value="UniProtKB-UniRule"/>
</dbReference>
<dbReference type="GO" id="GO:0006437">
    <property type="term" value="P:tyrosyl-tRNA aminoacylation"/>
    <property type="evidence" value="ECO:0007669"/>
    <property type="project" value="UniProtKB-UniRule"/>
</dbReference>
<dbReference type="CDD" id="cd00805">
    <property type="entry name" value="TyrRS_core"/>
    <property type="match status" value="1"/>
</dbReference>
<dbReference type="Gene3D" id="3.40.50.620">
    <property type="entry name" value="HUPs"/>
    <property type="match status" value="1"/>
</dbReference>
<dbReference type="Gene3D" id="1.10.240.10">
    <property type="entry name" value="Tyrosyl-Transfer RNA Synthetase"/>
    <property type="match status" value="1"/>
</dbReference>
<dbReference type="HAMAP" id="MF_02008">
    <property type="entry name" value="Tyr_tRNA_synth_type3"/>
    <property type="match status" value="1"/>
</dbReference>
<dbReference type="InterPro" id="IPR001412">
    <property type="entry name" value="aa-tRNA-synth_I_CS"/>
</dbReference>
<dbReference type="InterPro" id="IPR002305">
    <property type="entry name" value="aa-tRNA-synth_Ic"/>
</dbReference>
<dbReference type="InterPro" id="IPR014729">
    <property type="entry name" value="Rossmann-like_a/b/a_fold"/>
</dbReference>
<dbReference type="InterPro" id="IPR002307">
    <property type="entry name" value="Tyr-tRNA-ligase"/>
</dbReference>
<dbReference type="InterPro" id="IPR023684">
    <property type="entry name" value="Tyr-tRNA-ligase_3"/>
</dbReference>
<dbReference type="InterPro" id="IPR023617">
    <property type="entry name" value="Tyr-tRNA-ligase_arc/euk-type"/>
</dbReference>
<dbReference type="InterPro" id="IPR050489">
    <property type="entry name" value="Tyr-tRNA_synthase"/>
</dbReference>
<dbReference type="NCBIfam" id="NF006330">
    <property type="entry name" value="PRK08560.1"/>
    <property type="match status" value="1"/>
</dbReference>
<dbReference type="NCBIfam" id="TIGR00234">
    <property type="entry name" value="tyrS"/>
    <property type="match status" value="1"/>
</dbReference>
<dbReference type="PANTHER" id="PTHR46264:SF4">
    <property type="entry name" value="TYROSINE--TRNA LIGASE, CYTOPLASMIC"/>
    <property type="match status" value="1"/>
</dbReference>
<dbReference type="PANTHER" id="PTHR46264">
    <property type="entry name" value="TYROSINE-TRNA LIGASE"/>
    <property type="match status" value="1"/>
</dbReference>
<dbReference type="Pfam" id="PF00579">
    <property type="entry name" value="tRNA-synt_1b"/>
    <property type="match status" value="1"/>
</dbReference>
<dbReference type="PIRSF" id="PIRSF006588">
    <property type="entry name" value="TyrRS_arch_euk"/>
    <property type="match status" value="1"/>
</dbReference>
<dbReference type="PRINTS" id="PR01040">
    <property type="entry name" value="TRNASYNTHTYR"/>
</dbReference>
<dbReference type="SUPFAM" id="SSF52374">
    <property type="entry name" value="Nucleotidylyl transferase"/>
    <property type="match status" value="1"/>
</dbReference>
<dbReference type="PROSITE" id="PS00178">
    <property type="entry name" value="AA_TRNA_LIGASE_I"/>
    <property type="match status" value="1"/>
</dbReference>
<feature type="chain" id="PRO_0000240260" description="Tyrosine--tRNA ligase">
    <location>
        <begin position="1"/>
        <end position="313"/>
    </location>
</feature>
<feature type="short sequence motif" description="'HIGH' region">
    <location>
        <begin position="37"/>
        <end position="45"/>
    </location>
</feature>
<feature type="short sequence motif" description="'KMSKS' region">
    <location>
        <begin position="208"/>
        <end position="212"/>
    </location>
</feature>
<feature type="binding site" evidence="1">
    <location>
        <position position="32"/>
    </location>
    <ligand>
        <name>L-tyrosine</name>
        <dbReference type="ChEBI" id="CHEBI:58315"/>
    </ligand>
</feature>
<feature type="binding site" evidence="1">
    <location>
        <position position="152"/>
    </location>
    <ligand>
        <name>L-tyrosine</name>
        <dbReference type="ChEBI" id="CHEBI:58315"/>
    </ligand>
</feature>
<feature type="binding site" evidence="1">
    <location>
        <position position="156"/>
    </location>
    <ligand>
        <name>L-tyrosine</name>
        <dbReference type="ChEBI" id="CHEBI:58315"/>
    </ligand>
</feature>
<feature type="binding site" evidence="1">
    <location>
        <position position="159"/>
    </location>
    <ligand>
        <name>L-tyrosine</name>
        <dbReference type="ChEBI" id="CHEBI:58315"/>
    </ligand>
</feature>
<feature type="binding site" evidence="1">
    <location>
        <position position="174"/>
    </location>
    <ligand>
        <name>L-tyrosine</name>
        <dbReference type="ChEBI" id="CHEBI:58315"/>
    </ligand>
</feature>
<feature type="binding site" evidence="1">
    <location>
        <position position="211"/>
    </location>
    <ligand>
        <name>ATP</name>
        <dbReference type="ChEBI" id="CHEBI:30616"/>
    </ligand>
</feature>
<evidence type="ECO:0000255" key="1">
    <source>
        <dbReference type="HAMAP-Rule" id="MF_02008"/>
    </source>
</evidence>
<reference key="1">
    <citation type="journal article" date="2016" name="Stand. Genomic Sci.">
        <title>Complete genome sequence of Methanospirillum hungatei type strain JF1.</title>
        <authorList>
            <person name="Gunsalus R.P."/>
            <person name="Cook L.E."/>
            <person name="Crable B."/>
            <person name="Rohlin L."/>
            <person name="McDonald E."/>
            <person name="Mouttaki H."/>
            <person name="Sieber J.R."/>
            <person name="Poweleit N."/>
            <person name="Zhou H."/>
            <person name="Lapidus A.L."/>
            <person name="Daligault H.E."/>
            <person name="Land M."/>
            <person name="Gilna P."/>
            <person name="Ivanova N."/>
            <person name="Kyrpides N."/>
            <person name="Culley D.E."/>
            <person name="McInerney M.J."/>
        </authorList>
    </citation>
    <scope>NUCLEOTIDE SEQUENCE [LARGE SCALE GENOMIC DNA]</scope>
    <source>
        <strain>ATCC 27890 / DSM 864 / NBRC 100397 / JF-1</strain>
    </source>
</reference>
<proteinExistence type="inferred from homology"/>
<accession>Q2FNA1</accession>
<name>SYY_METHJ</name>
<sequence length="313" mass="35348">MDTYARVIRNTVEVVTDEELRSLLDRPVRKVYAGYEPSGEIHLGHLVTINKLIDLRDAGFEVTVLLADLHAFLNRKGTMEEVKKLAEYNRRCFEGLGLTDIKYVLGSSFQLSPEYQILVHELSQAITLNRAKRSMDEVGRQMDNPTVSQMVYPIMQMADIAMLGVDAALGGIDQRKIHMLAREYLPSKNYPSPVCIHVPILQGLDGKKMSSSQGNYISVAESEEDIRKKMKKAFCPPEVEDNPVLQVLQHHIFPRLDTVTIERPEKFGGNRTFGSYEEMEQAYAKGEIHPADLKTAVAESLITILAPVREYLK</sequence>
<comment type="function">
    <text evidence="1">Catalyzes the attachment of tyrosine to tRNA(Tyr) in a two-step reaction: tyrosine is first activated by ATP to form Tyr-AMP and then transferred to the acceptor end of tRNA(Tyr).</text>
</comment>
<comment type="catalytic activity">
    <reaction evidence="1">
        <text>tRNA(Tyr) + L-tyrosine + ATP = L-tyrosyl-tRNA(Tyr) + AMP + diphosphate + H(+)</text>
        <dbReference type="Rhea" id="RHEA:10220"/>
        <dbReference type="Rhea" id="RHEA-COMP:9706"/>
        <dbReference type="Rhea" id="RHEA-COMP:9707"/>
        <dbReference type="ChEBI" id="CHEBI:15378"/>
        <dbReference type="ChEBI" id="CHEBI:30616"/>
        <dbReference type="ChEBI" id="CHEBI:33019"/>
        <dbReference type="ChEBI" id="CHEBI:58315"/>
        <dbReference type="ChEBI" id="CHEBI:78442"/>
        <dbReference type="ChEBI" id="CHEBI:78536"/>
        <dbReference type="ChEBI" id="CHEBI:456215"/>
        <dbReference type="EC" id="6.1.1.1"/>
    </reaction>
</comment>
<comment type="subunit">
    <text evidence="1">Homodimer.</text>
</comment>
<comment type="subcellular location">
    <subcellularLocation>
        <location evidence="1">Cytoplasm</location>
    </subcellularLocation>
</comment>
<comment type="similarity">
    <text evidence="1">Belongs to the class-I aminoacyl-tRNA synthetase family. TyrS type 3 subfamily.</text>
</comment>
<keyword id="KW-0030">Aminoacyl-tRNA synthetase</keyword>
<keyword id="KW-0067">ATP-binding</keyword>
<keyword id="KW-0963">Cytoplasm</keyword>
<keyword id="KW-0436">Ligase</keyword>
<keyword id="KW-0547">Nucleotide-binding</keyword>
<keyword id="KW-0648">Protein biosynthesis</keyword>
<keyword id="KW-1185">Reference proteome</keyword>
<protein>
    <recommendedName>
        <fullName evidence="1">Tyrosine--tRNA ligase</fullName>
        <ecNumber evidence="1">6.1.1.1</ecNumber>
    </recommendedName>
    <alternativeName>
        <fullName evidence="1">Tyrosyl-tRNA synthetase</fullName>
        <shortName evidence="1">TyrRS</shortName>
    </alternativeName>
</protein>
<organism>
    <name type="scientific">Methanospirillum hungatei JF-1 (strain ATCC 27890 / DSM 864 / NBRC 100397 / JF-1)</name>
    <dbReference type="NCBI Taxonomy" id="323259"/>
    <lineage>
        <taxon>Archaea</taxon>
        <taxon>Methanobacteriati</taxon>
        <taxon>Methanobacteriota</taxon>
        <taxon>Stenosarchaea group</taxon>
        <taxon>Methanomicrobia</taxon>
        <taxon>Methanomicrobiales</taxon>
        <taxon>Methanospirillaceae</taxon>
        <taxon>Methanospirillum</taxon>
    </lineage>
</organism>
<gene>
    <name evidence="1" type="primary">tyrS</name>
    <name type="ordered locus">Mhun_2463</name>
</gene>